<proteinExistence type="inferred from homology"/>
<reference key="1">
    <citation type="journal article" date="2001" name="Nature">
        <title>Genome sequence of Yersinia pestis, the causative agent of plague.</title>
        <authorList>
            <person name="Parkhill J."/>
            <person name="Wren B.W."/>
            <person name="Thomson N.R."/>
            <person name="Titball R.W."/>
            <person name="Holden M.T.G."/>
            <person name="Prentice M.B."/>
            <person name="Sebaihia M."/>
            <person name="James K.D."/>
            <person name="Churcher C.M."/>
            <person name="Mungall K.L."/>
            <person name="Baker S."/>
            <person name="Basham D."/>
            <person name="Bentley S.D."/>
            <person name="Brooks K."/>
            <person name="Cerdeno-Tarraga A.-M."/>
            <person name="Chillingworth T."/>
            <person name="Cronin A."/>
            <person name="Davies R.M."/>
            <person name="Davis P."/>
            <person name="Dougan G."/>
            <person name="Feltwell T."/>
            <person name="Hamlin N."/>
            <person name="Holroyd S."/>
            <person name="Jagels K."/>
            <person name="Karlyshev A.V."/>
            <person name="Leather S."/>
            <person name="Moule S."/>
            <person name="Oyston P.C.F."/>
            <person name="Quail M.A."/>
            <person name="Rutherford K.M."/>
            <person name="Simmonds M."/>
            <person name="Skelton J."/>
            <person name="Stevens K."/>
            <person name="Whitehead S."/>
            <person name="Barrell B.G."/>
        </authorList>
    </citation>
    <scope>NUCLEOTIDE SEQUENCE [LARGE SCALE GENOMIC DNA]</scope>
    <source>
        <strain>CO-92 / Biovar Orientalis</strain>
    </source>
</reference>
<reference key="2">
    <citation type="journal article" date="2002" name="J. Bacteriol.">
        <title>Genome sequence of Yersinia pestis KIM.</title>
        <authorList>
            <person name="Deng W."/>
            <person name="Burland V."/>
            <person name="Plunkett G. III"/>
            <person name="Boutin A."/>
            <person name="Mayhew G.F."/>
            <person name="Liss P."/>
            <person name="Perna N.T."/>
            <person name="Rose D.J."/>
            <person name="Mau B."/>
            <person name="Zhou S."/>
            <person name="Schwartz D.C."/>
            <person name="Fetherston J.D."/>
            <person name="Lindler L.E."/>
            <person name="Brubaker R.R."/>
            <person name="Plano G.V."/>
            <person name="Straley S.C."/>
            <person name="McDonough K.A."/>
            <person name="Nilles M.L."/>
            <person name="Matson J.S."/>
            <person name="Blattner F.R."/>
            <person name="Perry R.D."/>
        </authorList>
    </citation>
    <scope>NUCLEOTIDE SEQUENCE [LARGE SCALE GENOMIC DNA]</scope>
    <source>
        <strain>KIM10+ / Biovar Mediaevalis</strain>
    </source>
</reference>
<reference key="3">
    <citation type="journal article" date="2004" name="DNA Res.">
        <title>Complete genome sequence of Yersinia pestis strain 91001, an isolate avirulent to humans.</title>
        <authorList>
            <person name="Song Y."/>
            <person name="Tong Z."/>
            <person name="Wang J."/>
            <person name="Wang L."/>
            <person name="Guo Z."/>
            <person name="Han Y."/>
            <person name="Zhang J."/>
            <person name="Pei D."/>
            <person name="Zhou D."/>
            <person name="Qin H."/>
            <person name="Pang X."/>
            <person name="Han Y."/>
            <person name="Zhai J."/>
            <person name="Li M."/>
            <person name="Cui B."/>
            <person name="Qi Z."/>
            <person name="Jin L."/>
            <person name="Dai R."/>
            <person name="Chen F."/>
            <person name="Li S."/>
            <person name="Ye C."/>
            <person name="Du Z."/>
            <person name="Lin W."/>
            <person name="Wang J."/>
            <person name="Yu J."/>
            <person name="Yang H."/>
            <person name="Wang J."/>
            <person name="Huang P."/>
            <person name="Yang R."/>
        </authorList>
    </citation>
    <scope>NUCLEOTIDE SEQUENCE [LARGE SCALE GENOMIC DNA]</scope>
    <source>
        <strain>91001 / Biovar Mediaevalis</strain>
    </source>
</reference>
<gene>
    <name evidence="1" type="primary">arnA</name>
    <name type="ordered locus">YPO2420</name>
    <name type="ordered locus">y1919</name>
    <name type="ordered locus">YP_2207</name>
</gene>
<name>ARNA_YERPE</name>
<sequence>MKAIVFAYHDIGCVGLNALAEAGYDIQAVFTHTDNPGENRFFSSVARVAADLALPVFAPEDVNHPLWVERIRELQPDIIFSFYYRNMLSDEILSLAPQGGFNLHGSLLPQYRGRAPINWVLVNGETETGVTLHQMVKKADAGPIAGQYKVAISDVDTALTLHAKMRDAAQELLRNLLPRMKEGPLPLTPQKEADASYFGRRTAADGEIHWQKSAFTINNLVRAVTEPYPGAFSYLGQRKLTIWRSRPLDLVHNKLPGTVLSTAPLTVACGEGALEIITGQGEAGLYVQGDRLAQEMGIVTDVRLGNKPSNTLKRRTRVLILGVNGFIGNHLTERLLQDDRYEVYGLDIGSDAISRFLGNPAFHFVEGDISIHSEWIEYHIKKCDVILPLVAIATPIEYTRNPLRVFELDFEENLKIVRDCVKYNKRIVFPSTSEVYGMCDDKEFDEDTSRLIVGPINKQRWIYSVSKQLLDRVIWAYGVKEGLKFTLFRPFNWMGPRLDNLDAARIGSSRAITQLILNLVEGSPIKLVDGGAQKRCFTDIHDGIEALFRIIENRDGCCDGRIINIGNPTNEASIRELAEMLLTSFENHELRDHFPPFAGFKDIESSAYYGKGYQDVEYRTPSIKNARRILHWQPEIAMQQTVTETLDFFLRAAVIEKTAAPKDELNA</sequence>
<organism>
    <name type="scientific">Yersinia pestis</name>
    <dbReference type="NCBI Taxonomy" id="632"/>
    <lineage>
        <taxon>Bacteria</taxon>
        <taxon>Pseudomonadati</taxon>
        <taxon>Pseudomonadota</taxon>
        <taxon>Gammaproteobacteria</taxon>
        <taxon>Enterobacterales</taxon>
        <taxon>Yersiniaceae</taxon>
        <taxon>Yersinia</taxon>
    </lineage>
</organism>
<feature type="chain" id="PRO_0000083112" description="Bifunctional polymyxin resistance protein ArnA">
    <location>
        <begin position="1"/>
        <end position="667"/>
    </location>
</feature>
<feature type="region of interest" description="Formyltransferase ArnAFT">
    <location>
        <begin position="1"/>
        <end position="304"/>
    </location>
</feature>
<feature type="region of interest" description="Dehydrogenase ArnADH">
    <location>
        <begin position="314"/>
        <end position="667"/>
    </location>
</feature>
<feature type="active site" description="Proton donor; for formyltransferase activity" evidence="1">
    <location>
        <position position="104"/>
    </location>
</feature>
<feature type="active site" description="Proton acceptor; for decarboxylase activity" evidence="1">
    <location>
        <position position="434"/>
    </location>
</feature>
<feature type="active site" description="Proton donor; for decarboxylase activity" evidence="1">
    <location>
        <position position="619"/>
    </location>
</feature>
<feature type="binding site" evidence="1">
    <location>
        <position position="114"/>
    </location>
    <ligand>
        <name>(6R)-10-formyltetrahydrofolate</name>
        <dbReference type="ChEBI" id="CHEBI:195366"/>
    </ligand>
</feature>
<feature type="binding site" evidence="1">
    <location>
        <begin position="136"/>
        <end position="140"/>
    </location>
    <ligand>
        <name>(6R)-10-formyltetrahydrofolate</name>
        <dbReference type="ChEBI" id="CHEBI:195366"/>
    </ligand>
</feature>
<feature type="binding site" evidence="1">
    <location>
        <position position="347"/>
    </location>
    <ligand>
        <name>NAD(+)</name>
        <dbReference type="ChEBI" id="CHEBI:57540"/>
    </ligand>
</feature>
<feature type="binding site" evidence="1">
    <location>
        <begin position="368"/>
        <end position="369"/>
    </location>
    <ligand>
        <name>NAD(+)</name>
        <dbReference type="ChEBI" id="CHEBI:57540"/>
    </ligand>
</feature>
<feature type="binding site" evidence="1">
    <location>
        <position position="393"/>
    </location>
    <ligand>
        <name>UDP-alpha-D-glucuronate</name>
        <dbReference type="ChEBI" id="CHEBI:58052"/>
    </ligand>
</feature>
<feature type="binding site" evidence="1">
    <location>
        <position position="398"/>
    </location>
    <ligand>
        <name>UDP-alpha-D-glucuronate</name>
        <dbReference type="ChEBI" id="CHEBI:58052"/>
    </ligand>
</feature>
<feature type="binding site" evidence="1">
    <location>
        <begin position="432"/>
        <end position="433"/>
    </location>
    <ligand>
        <name>UDP-alpha-D-glucuronate</name>
        <dbReference type="ChEBI" id="CHEBI:58052"/>
    </ligand>
</feature>
<feature type="binding site" evidence="1">
    <location>
        <position position="460"/>
    </location>
    <ligand>
        <name>UDP-alpha-D-glucuronate</name>
        <dbReference type="ChEBI" id="CHEBI:58052"/>
    </ligand>
</feature>
<feature type="binding site" evidence="1">
    <location>
        <position position="492"/>
    </location>
    <ligand>
        <name>UDP-alpha-D-glucuronate</name>
        <dbReference type="ChEBI" id="CHEBI:58052"/>
    </ligand>
</feature>
<feature type="binding site" evidence="1">
    <location>
        <begin position="526"/>
        <end position="535"/>
    </location>
    <ligand>
        <name>UDP-alpha-D-glucuronate</name>
        <dbReference type="ChEBI" id="CHEBI:58052"/>
    </ligand>
</feature>
<feature type="binding site" evidence="1">
    <location>
        <position position="613"/>
    </location>
    <ligand>
        <name>UDP-alpha-D-glucuronate</name>
        <dbReference type="ChEBI" id="CHEBI:58052"/>
    </ligand>
</feature>
<feature type="site" description="Transition state stabilizer" evidence="1">
    <location>
        <position position="102"/>
    </location>
</feature>
<feature type="site" description="Raises pKa of active site His" evidence="1">
    <location>
        <position position="140"/>
    </location>
</feature>
<comment type="function">
    <text evidence="1">Bifunctional enzyme that catalyzes the oxidative decarboxylation of UDP-glucuronic acid (UDP-GlcUA) to UDP-4-keto-arabinose (UDP-Ara4O) and the addition of a formyl group to UDP-4-amino-4-deoxy-L-arabinose (UDP-L-Ara4N) to form UDP-L-4-formamido-arabinose (UDP-L-Ara4FN). The modified arabinose is attached to lipid A and is required for resistance to polymyxin and cationic antimicrobial peptides.</text>
</comment>
<comment type="catalytic activity">
    <reaction evidence="1">
        <text>UDP-alpha-D-glucuronate + NAD(+) = UDP-beta-L-threo-pentopyranos-4-ulose + CO2 + NADH</text>
        <dbReference type="Rhea" id="RHEA:24702"/>
        <dbReference type="ChEBI" id="CHEBI:16526"/>
        <dbReference type="ChEBI" id="CHEBI:57540"/>
        <dbReference type="ChEBI" id="CHEBI:57945"/>
        <dbReference type="ChEBI" id="CHEBI:58052"/>
        <dbReference type="ChEBI" id="CHEBI:58710"/>
        <dbReference type="EC" id="1.1.1.305"/>
    </reaction>
</comment>
<comment type="catalytic activity">
    <reaction evidence="1">
        <text>UDP-4-amino-4-deoxy-beta-L-arabinose + (6R)-10-formyltetrahydrofolate = UDP-4-deoxy-4-formamido-beta-L-arabinose + (6S)-5,6,7,8-tetrahydrofolate + H(+)</text>
        <dbReference type="Rhea" id="RHEA:24706"/>
        <dbReference type="ChEBI" id="CHEBI:15378"/>
        <dbReference type="ChEBI" id="CHEBI:57453"/>
        <dbReference type="ChEBI" id="CHEBI:58708"/>
        <dbReference type="ChEBI" id="CHEBI:58709"/>
        <dbReference type="ChEBI" id="CHEBI:195366"/>
        <dbReference type="EC" id="2.1.2.13"/>
    </reaction>
</comment>
<comment type="pathway">
    <text evidence="1">Nucleotide-sugar biosynthesis; UDP-4-deoxy-4-formamido-beta-L-arabinose biosynthesis; UDP-4-deoxy-4-formamido-beta-L-arabinose from UDP-alpha-D-glucuronate: step 1/3.</text>
</comment>
<comment type="pathway">
    <text evidence="1">Nucleotide-sugar biosynthesis; UDP-4-deoxy-4-formamido-beta-L-arabinose biosynthesis; UDP-4-deoxy-4-formamido-beta-L-arabinose from UDP-alpha-D-glucuronate: step 3/3.</text>
</comment>
<comment type="pathway">
    <text evidence="1">Bacterial outer membrane biogenesis; lipopolysaccharide biosynthesis.</text>
</comment>
<comment type="subunit">
    <text evidence="1">Homohexamer, formed by a dimer of trimers.</text>
</comment>
<comment type="similarity">
    <text evidence="1">In the N-terminal section; belongs to the Fmt family. UDP-L-Ara4N formyltransferase subfamily.</text>
</comment>
<comment type="similarity">
    <text evidence="1">In the C-terminal section; belongs to the NAD(P)-dependent epimerase/dehydratase family. UDP-glucuronic acid decarboxylase subfamily.</text>
</comment>
<evidence type="ECO:0000255" key="1">
    <source>
        <dbReference type="HAMAP-Rule" id="MF_01166"/>
    </source>
</evidence>
<accession>Q8ZDX8</accession>
<accession>Q0WEA5</accession>
<accession>Q74TF5</accession>
<accession>Q7CIU0</accession>
<protein>
    <recommendedName>
        <fullName evidence="1">Bifunctional polymyxin resistance protein ArnA</fullName>
    </recommendedName>
    <domain>
        <recommendedName>
            <fullName evidence="1">UDP-4-amino-4-deoxy-L-arabinose formyltransferase</fullName>
            <ecNumber evidence="1">2.1.2.13</ecNumber>
        </recommendedName>
        <alternativeName>
            <fullName evidence="1">ArnAFT</fullName>
        </alternativeName>
        <alternativeName>
            <fullName evidence="1">UDP-L-Ara4N formyltransferase</fullName>
        </alternativeName>
    </domain>
    <domain>
        <recommendedName>
            <fullName evidence="1">UDP-glucuronic acid oxidase, UDP-4-keto-hexauronic acid decarboxylating</fullName>
            <ecNumber evidence="1">1.1.1.305</ecNumber>
        </recommendedName>
        <alternativeName>
            <fullName evidence="1">ArnADH</fullName>
        </alternativeName>
        <alternativeName>
            <fullName evidence="1">UDP-GlcUA decarboxylase</fullName>
        </alternativeName>
        <alternativeName>
            <fullName evidence="1">UDP-glucuronic acid dehydrogenase</fullName>
        </alternativeName>
    </domain>
</protein>
<dbReference type="EC" id="2.1.2.13" evidence="1"/>
<dbReference type="EC" id="1.1.1.305" evidence="1"/>
<dbReference type="EMBL" id="AL590842">
    <property type="protein sequence ID" value="CAL21047.1"/>
    <property type="molecule type" value="Genomic_DNA"/>
</dbReference>
<dbReference type="EMBL" id="AE009952">
    <property type="protein sequence ID" value="AAM85486.1"/>
    <property type="molecule type" value="Genomic_DNA"/>
</dbReference>
<dbReference type="EMBL" id="AE017042">
    <property type="protein sequence ID" value="AAS62413.1"/>
    <property type="molecule type" value="Genomic_DNA"/>
</dbReference>
<dbReference type="PIR" id="AD0295">
    <property type="entry name" value="AD0295"/>
</dbReference>
<dbReference type="RefSeq" id="WP_002211823.1">
    <property type="nucleotide sequence ID" value="NZ_WUCM01000025.1"/>
</dbReference>
<dbReference type="RefSeq" id="YP_002347383.1">
    <property type="nucleotide sequence ID" value="NC_003143.1"/>
</dbReference>
<dbReference type="SMR" id="Q8ZDX8"/>
<dbReference type="IntAct" id="Q8ZDX8">
    <property type="interactions" value="5"/>
</dbReference>
<dbReference type="STRING" id="214092.YPO2420"/>
<dbReference type="PaxDb" id="214092-YPO2420"/>
<dbReference type="DNASU" id="1146866"/>
<dbReference type="EnsemblBacteria" id="AAS62413">
    <property type="protein sequence ID" value="AAS62413"/>
    <property type="gene ID" value="YP_2207"/>
</dbReference>
<dbReference type="GeneID" id="57976257"/>
<dbReference type="KEGG" id="ype:YPO2420"/>
<dbReference type="KEGG" id="ypk:y1919"/>
<dbReference type="KEGG" id="ypm:YP_2207"/>
<dbReference type="PATRIC" id="fig|214092.21.peg.2828"/>
<dbReference type="eggNOG" id="COG0223">
    <property type="taxonomic scope" value="Bacteria"/>
</dbReference>
<dbReference type="eggNOG" id="COG0451">
    <property type="taxonomic scope" value="Bacteria"/>
</dbReference>
<dbReference type="HOGENOM" id="CLU_007383_23_2_6"/>
<dbReference type="OMA" id="VRYCVKY"/>
<dbReference type="OrthoDB" id="9802815at2"/>
<dbReference type="UniPathway" id="UPA00030"/>
<dbReference type="UniPathway" id="UPA00032">
    <property type="reaction ID" value="UER00492"/>
</dbReference>
<dbReference type="UniPathway" id="UPA00032">
    <property type="reaction ID" value="UER00494"/>
</dbReference>
<dbReference type="Proteomes" id="UP000000815">
    <property type="component" value="Chromosome"/>
</dbReference>
<dbReference type="Proteomes" id="UP000001019">
    <property type="component" value="Chromosome"/>
</dbReference>
<dbReference type="Proteomes" id="UP000002490">
    <property type="component" value="Chromosome"/>
</dbReference>
<dbReference type="GO" id="GO:0016020">
    <property type="term" value="C:membrane"/>
    <property type="evidence" value="ECO:0007669"/>
    <property type="project" value="GOC"/>
</dbReference>
<dbReference type="GO" id="GO:0016831">
    <property type="term" value="F:carboxy-lyase activity"/>
    <property type="evidence" value="ECO:0007669"/>
    <property type="project" value="InterPro"/>
</dbReference>
<dbReference type="GO" id="GO:0099619">
    <property type="term" value="F:UDP-4-amino-4-deoxy-L-arabinose formyltransferase activity"/>
    <property type="evidence" value="ECO:0007669"/>
    <property type="project" value="UniProtKB-EC"/>
</dbReference>
<dbReference type="GO" id="GO:0099618">
    <property type="term" value="F:UDP-glucuronate dehydrogenase activity"/>
    <property type="evidence" value="ECO:0007669"/>
    <property type="project" value="UniProtKB-EC"/>
</dbReference>
<dbReference type="GO" id="GO:0009245">
    <property type="term" value="P:lipid A biosynthetic process"/>
    <property type="evidence" value="ECO:0007669"/>
    <property type="project" value="UniProtKB-KW"/>
</dbReference>
<dbReference type="GO" id="GO:0009103">
    <property type="term" value="P:lipopolysaccharide biosynthetic process"/>
    <property type="evidence" value="ECO:0007669"/>
    <property type="project" value="UniProtKB-UniRule"/>
</dbReference>
<dbReference type="GO" id="GO:0046677">
    <property type="term" value="P:response to antibiotic"/>
    <property type="evidence" value="ECO:0007669"/>
    <property type="project" value="UniProtKB-KW"/>
</dbReference>
<dbReference type="CDD" id="cd08702">
    <property type="entry name" value="Arna_FMT_C"/>
    <property type="match status" value="1"/>
</dbReference>
<dbReference type="CDD" id="cd05257">
    <property type="entry name" value="Arna_like_SDR_e"/>
    <property type="match status" value="1"/>
</dbReference>
<dbReference type="FunFam" id="3.40.50.720:FF:000197">
    <property type="entry name" value="Bifunctional polymyxin resistance protein ArnA"/>
    <property type="match status" value="1"/>
</dbReference>
<dbReference type="Gene3D" id="3.40.50.12230">
    <property type="match status" value="1"/>
</dbReference>
<dbReference type="Gene3D" id="3.40.50.720">
    <property type="entry name" value="NAD(P)-binding Rossmann-like Domain"/>
    <property type="match status" value="1"/>
</dbReference>
<dbReference type="HAMAP" id="MF_01166">
    <property type="entry name" value="ArnA"/>
    <property type="match status" value="1"/>
</dbReference>
<dbReference type="InterPro" id="IPR045869">
    <property type="entry name" value="Arna-like_SDR_e"/>
</dbReference>
<dbReference type="InterPro" id="IPR021168">
    <property type="entry name" value="Bifun_polymyxin_resist_ArnA"/>
</dbReference>
<dbReference type="InterPro" id="IPR001509">
    <property type="entry name" value="Epimerase_deHydtase"/>
</dbReference>
<dbReference type="InterPro" id="IPR005793">
    <property type="entry name" value="Formyl_trans_C"/>
</dbReference>
<dbReference type="InterPro" id="IPR002376">
    <property type="entry name" value="Formyl_transf_N"/>
</dbReference>
<dbReference type="InterPro" id="IPR036477">
    <property type="entry name" value="Formyl_transf_N_sf"/>
</dbReference>
<dbReference type="InterPro" id="IPR011034">
    <property type="entry name" value="Formyl_transferase-like_C_sf"/>
</dbReference>
<dbReference type="InterPro" id="IPR050177">
    <property type="entry name" value="Lipid_A_modif_metabolic_enz"/>
</dbReference>
<dbReference type="InterPro" id="IPR036291">
    <property type="entry name" value="NAD(P)-bd_dom_sf"/>
</dbReference>
<dbReference type="NCBIfam" id="NF005414">
    <property type="entry name" value="PRK06988.1"/>
    <property type="match status" value="1"/>
</dbReference>
<dbReference type="NCBIfam" id="NF005998">
    <property type="entry name" value="PRK08125.1"/>
    <property type="match status" value="1"/>
</dbReference>
<dbReference type="NCBIfam" id="NF008872">
    <property type="entry name" value="PRK11908.1"/>
    <property type="match status" value="1"/>
</dbReference>
<dbReference type="PANTHER" id="PTHR43245">
    <property type="entry name" value="BIFUNCTIONAL POLYMYXIN RESISTANCE PROTEIN ARNA"/>
    <property type="match status" value="1"/>
</dbReference>
<dbReference type="PANTHER" id="PTHR43245:SF13">
    <property type="entry name" value="UDP-D-APIOSE_UDP-D-XYLOSE SYNTHASE 2"/>
    <property type="match status" value="1"/>
</dbReference>
<dbReference type="Pfam" id="PF01370">
    <property type="entry name" value="Epimerase"/>
    <property type="match status" value="1"/>
</dbReference>
<dbReference type="Pfam" id="PF02911">
    <property type="entry name" value="Formyl_trans_C"/>
    <property type="match status" value="1"/>
</dbReference>
<dbReference type="Pfam" id="PF00551">
    <property type="entry name" value="Formyl_trans_N"/>
    <property type="match status" value="1"/>
</dbReference>
<dbReference type="PIRSF" id="PIRSF036506">
    <property type="entry name" value="Bifun_polymyxin_resist_ArnA"/>
    <property type="match status" value="1"/>
</dbReference>
<dbReference type="SUPFAM" id="SSF50486">
    <property type="entry name" value="FMT C-terminal domain-like"/>
    <property type="match status" value="1"/>
</dbReference>
<dbReference type="SUPFAM" id="SSF53328">
    <property type="entry name" value="Formyltransferase"/>
    <property type="match status" value="1"/>
</dbReference>
<dbReference type="SUPFAM" id="SSF51735">
    <property type="entry name" value="NAD(P)-binding Rossmann-fold domains"/>
    <property type="match status" value="1"/>
</dbReference>
<keyword id="KW-0046">Antibiotic resistance</keyword>
<keyword id="KW-0441">Lipid A biosynthesis</keyword>
<keyword id="KW-0444">Lipid biosynthesis</keyword>
<keyword id="KW-0443">Lipid metabolism</keyword>
<keyword id="KW-0448">Lipopolysaccharide biosynthesis</keyword>
<keyword id="KW-0511">Multifunctional enzyme</keyword>
<keyword id="KW-0520">NAD</keyword>
<keyword id="KW-0560">Oxidoreductase</keyword>
<keyword id="KW-1185">Reference proteome</keyword>
<keyword id="KW-0808">Transferase</keyword>